<dbReference type="EMBL" id="CP001233">
    <property type="protein sequence ID" value="ACP06895.1"/>
    <property type="molecule type" value="Genomic_DNA"/>
</dbReference>
<dbReference type="RefSeq" id="WP_000643446.1">
    <property type="nucleotide sequence ID" value="NC_012578.1"/>
</dbReference>
<dbReference type="SMR" id="C3LSA8"/>
<dbReference type="GeneID" id="89513343"/>
<dbReference type="KEGG" id="vcm:VCM66_2599"/>
<dbReference type="HOGENOM" id="CLU_114306_4_3_6"/>
<dbReference type="Proteomes" id="UP000001217">
    <property type="component" value="Chromosome I"/>
</dbReference>
<dbReference type="GO" id="GO:1990904">
    <property type="term" value="C:ribonucleoprotein complex"/>
    <property type="evidence" value="ECO:0007669"/>
    <property type="project" value="UniProtKB-KW"/>
</dbReference>
<dbReference type="GO" id="GO:0005840">
    <property type="term" value="C:ribosome"/>
    <property type="evidence" value="ECO:0007669"/>
    <property type="project" value="UniProtKB-KW"/>
</dbReference>
<dbReference type="GO" id="GO:0046872">
    <property type="term" value="F:metal ion binding"/>
    <property type="evidence" value="ECO:0007669"/>
    <property type="project" value="UniProtKB-KW"/>
</dbReference>
<dbReference type="GO" id="GO:0019843">
    <property type="term" value="F:rRNA binding"/>
    <property type="evidence" value="ECO:0007669"/>
    <property type="project" value="UniProtKB-KW"/>
</dbReference>
<dbReference type="GO" id="GO:0003735">
    <property type="term" value="F:structural constituent of ribosome"/>
    <property type="evidence" value="ECO:0007669"/>
    <property type="project" value="InterPro"/>
</dbReference>
<dbReference type="GO" id="GO:0006412">
    <property type="term" value="P:translation"/>
    <property type="evidence" value="ECO:0007669"/>
    <property type="project" value="UniProtKB-UniRule"/>
</dbReference>
<dbReference type="Gene3D" id="4.10.830.30">
    <property type="entry name" value="Ribosomal protein L31"/>
    <property type="match status" value="1"/>
</dbReference>
<dbReference type="HAMAP" id="MF_00501">
    <property type="entry name" value="Ribosomal_bL31_1"/>
    <property type="match status" value="1"/>
</dbReference>
<dbReference type="InterPro" id="IPR034704">
    <property type="entry name" value="Ribosomal_bL28/bL31-like_sf"/>
</dbReference>
<dbReference type="InterPro" id="IPR002150">
    <property type="entry name" value="Ribosomal_bL31"/>
</dbReference>
<dbReference type="InterPro" id="IPR027491">
    <property type="entry name" value="Ribosomal_bL31_A"/>
</dbReference>
<dbReference type="InterPro" id="IPR042105">
    <property type="entry name" value="Ribosomal_bL31_sf"/>
</dbReference>
<dbReference type="NCBIfam" id="TIGR00105">
    <property type="entry name" value="L31"/>
    <property type="match status" value="1"/>
</dbReference>
<dbReference type="NCBIfam" id="NF000612">
    <property type="entry name" value="PRK00019.1"/>
    <property type="match status" value="1"/>
</dbReference>
<dbReference type="NCBIfam" id="NF001809">
    <property type="entry name" value="PRK00528.1"/>
    <property type="match status" value="1"/>
</dbReference>
<dbReference type="PANTHER" id="PTHR33280">
    <property type="entry name" value="50S RIBOSOMAL PROTEIN L31, CHLOROPLASTIC"/>
    <property type="match status" value="1"/>
</dbReference>
<dbReference type="PANTHER" id="PTHR33280:SF6">
    <property type="entry name" value="LARGE RIBOSOMAL SUBUNIT PROTEIN BL31A"/>
    <property type="match status" value="1"/>
</dbReference>
<dbReference type="Pfam" id="PF01197">
    <property type="entry name" value="Ribosomal_L31"/>
    <property type="match status" value="1"/>
</dbReference>
<dbReference type="PRINTS" id="PR01249">
    <property type="entry name" value="RIBOSOMALL31"/>
</dbReference>
<dbReference type="SUPFAM" id="SSF143800">
    <property type="entry name" value="L28p-like"/>
    <property type="match status" value="1"/>
</dbReference>
<dbReference type="PROSITE" id="PS01143">
    <property type="entry name" value="RIBOSOMAL_L31"/>
    <property type="match status" value="1"/>
</dbReference>
<name>RL31_VIBCM</name>
<evidence type="ECO:0000255" key="1">
    <source>
        <dbReference type="HAMAP-Rule" id="MF_00501"/>
    </source>
</evidence>
<evidence type="ECO:0000305" key="2"/>
<organism>
    <name type="scientific">Vibrio cholerae serotype O1 (strain M66-2)</name>
    <dbReference type="NCBI Taxonomy" id="579112"/>
    <lineage>
        <taxon>Bacteria</taxon>
        <taxon>Pseudomonadati</taxon>
        <taxon>Pseudomonadota</taxon>
        <taxon>Gammaproteobacteria</taxon>
        <taxon>Vibrionales</taxon>
        <taxon>Vibrionaceae</taxon>
        <taxon>Vibrio</taxon>
    </lineage>
</organism>
<comment type="function">
    <text evidence="1">Binds the 23S rRNA.</text>
</comment>
<comment type="cofactor">
    <cofactor evidence="1">
        <name>Zn(2+)</name>
        <dbReference type="ChEBI" id="CHEBI:29105"/>
    </cofactor>
    <text evidence="1">Binds 1 zinc ion per subunit.</text>
</comment>
<comment type="subunit">
    <text evidence="1">Part of the 50S ribosomal subunit.</text>
</comment>
<comment type="similarity">
    <text evidence="1">Belongs to the bacterial ribosomal protein bL31 family. Type A subfamily.</text>
</comment>
<sequence>MKAGIHPEYKAVNATCSCGNSFVFNSTLGKDTMHLDVCDKCHPFYSGKQRIVDTGGRVERFNKRFGALSAKK</sequence>
<proteinExistence type="inferred from homology"/>
<accession>C3LSA8</accession>
<keyword id="KW-0479">Metal-binding</keyword>
<keyword id="KW-0687">Ribonucleoprotein</keyword>
<keyword id="KW-0689">Ribosomal protein</keyword>
<keyword id="KW-0694">RNA-binding</keyword>
<keyword id="KW-0699">rRNA-binding</keyword>
<keyword id="KW-0862">Zinc</keyword>
<feature type="chain" id="PRO_1000176977" description="Large ribosomal subunit protein bL31">
    <location>
        <begin position="1"/>
        <end position="72"/>
    </location>
</feature>
<feature type="binding site" evidence="1">
    <location>
        <position position="16"/>
    </location>
    <ligand>
        <name>Zn(2+)</name>
        <dbReference type="ChEBI" id="CHEBI:29105"/>
    </ligand>
</feature>
<feature type="binding site" evidence="1">
    <location>
        <position position="18"/>
    </location>
    <ligand>
        <name>Zn(2+)</name>
        <dbReference type="ChEBI" id="CHEBI:29105"/>
    </ligand>
</feature>
<feature type="binding site" evidence="1">
    <location>
        <position position="38"/>
    </location>
    <ligand>
        <name>Zn(2+)</name>
        <dbReference type="ChEBI" id="CHEBI:29105"/>
    </ligand>
</feature>
<feature type="binding site" evidence="1">
    <location>
        <position position="41"/>
    </location>
    <ligand>
        <name>Zn(2+)</name>
        <dbReference type="ChEBI" id="CHEBI:29105"/>
    </ligand>
</feature>
<protein>
    <recommendedName>
        <fullName evidence="1">Large ribosomal subunit protein bL31</fullName>
    </recommendedName>
    <alternativeName>
        <fullName evidence="2">50S ribosomal protein L31</fullName>
    </alternativeName>
</protein>
<reference key="1">
    <citation type="journal article" date="2008" name="PLoS ONE">
        <title>A recalibrated molecular clock and independent origins for the cholera pandemic clones.</title>
        <authorList>
            <person name="Feng L."/>
            <person name="Reeves P.R."/>
            <person name="Lan R."/>
            <person name="Ren Y."/>
            <person name="Gao C."/>
            <person name="Zhou Z."/>
            <person name="Ren Y."/>
            <person name="Cheng J."/>
            <person name="Wang W."/>
            <person name="Wang J."/>
            <person name="Qian W."/>
            <person name="Li D."/>
            <person name="Wang L."/>
        </authorList>
    </citation>
    <scope>NUCLEOTIDE SEQUENCE [LARGE SCALE GENOMIC DNA]</scope>
    <source>
        <strain>M66-2</strain>
    </source>
</reference>
<gene>
    <name evidence="1" type="primary">rpmE</name>
    <name type="ordered locus">VCM66_2599</name>
</gene>